<name>SSRP_DEHMC</name>
<gene>
    <name evidence="1" type="primary">smpB</name>
    <name type="ordered locus">cbdbA1479</name>
</gene>
<feature type="chain" id="PRO_0000331040" description="SsrA-binding protein">
    <location>
        <begin position="1"/>
        <end position="172"/>
    </location>
</feature>
<dbReference type="EMBL" id="AJ965256">
    <property type="protein sequence ID" value="CAI83501.1"/>
    <property type="molecule type" value="Genomic_DNA"/>
</dbReference>
<dbReference type="SMR" id="Q3ZZ31"/>
<dbReference type="KEGG" id="deh:cbdbA1479"/>
<dbReference type="HOGENOM" id="CLU_108953_0_0_0"/>
<dbReference type="Proteomes" id="UP000000433">
    <property type="component" value="Chromosome"/>
</dbReference>
<dbReference type="GO" id="GO:0005829">
    <property type="term" value="C:cytosol"/>
    <property type="evidence" value="ECO:0007669"/>
    <property type="project" value="TreeGrafter"/>
</dbReference>
<dbReference type="GO" id="GO:0003723">
    <property type="term" value="F:RNA binding"/>
    <property type="evidence" value="ECO:0007669"/>
    <property type="project" value="UniProtKB-UniRule"/>
</dbReference>
<dbReference type="GO" id="GO:0070929">
    <property type="term" value="P:trans-translation"/>
    <property type="evidence" value="ECO:0007669"/>
    <property type="project" value="UniProtKB-UniRule"/>
</dbReference>
<dbReference type="CDD" id="cd09294">
    <property type="entry name" value="SmpB"/>
    <property type="match status" value="1"/>
</dbReference>
<dbReference type="Gene3D" id="2.40.280.10">
    <property type="match status" value="1"/>
</dbReference>
<dbReference type="HAMAP" id="MF_00023">
    <property type="entry name" value="SmpB"/>
    <property type="match status" value="1"/>
</dbReference>
<dbReference type="InterPro" id="IPR023620">
    <property type="entry name" value="SmpB"/>
</dbReference>
<dbReference type="InterPro" id="IPR000037">
    <property type="entry name" value="SsrA-bd_prot"/>
</dbReference>
<dbReference type="InterPro" id="IPR020081">
    <property type="entry name" value="SsrA-bd_prot_CS"/>
</dbReference>
<dbReference type="NCBIfam" id="NF003843">
    <property type="entry name" value="PRK05422.1"/>
    <property type="match status" value="1"/>
</dbReference>
<dbReference type="NCBIfam" id="TIGR00086">
    <property type="entry name" value="smpB"/>
    <property type="match status" value="1"/>
</dbReference>
<dbReference type="PANTHER" id="PTHR30308:SF2">
    <property type="entry name" value="SSRA-BINDING PROTEIN"/>
    <property type="match status" value="1"/>
</dbReference>
<dbReference type="PANTHER" id="PTHR30308">
    <property type="entry name" value="TMRNA-BINDING COMPONENT OF TRANS-TRANSLATION TAGGING COMPLEX"/>
    <property type="match status" value="1"/>
</dbReference>
<dbReference type="Pfam" id="PF01668">
    <property type="entry name" value="SmpB"/>
    <property type="match status" value="1"/>
</dbReference>
<dbReference type="SUPFAM" id="SSF74982">
    <property type="entry name" value="Small protein B (SmpB)"/>
    <property type="match status" value="1"/>
</dbReference>
<dbReference type="PROSITE" id="PS01317">
    <property type="entry name" value="SSRP"/>
    <property type="match status" value="1"/>
</dbReference>
<protein>
    <recommendedName>
        <fullName evidence="1">SsrA-binding protein</fullName>
    </recommendedName>
    <alternativeName>
        <fullName evidence="1">Small protein B</fullName>
    </alternativeName>
</protein>
<keyword id="KW-0963">Cytoplasm</keyword>
<keyword id="KW-0694">RNA-binding</keyword>
<evidence type="ECO:0000255" key="1">
    <source>
        <dbReference type="HAMAP-Rule" id="MF_00023"/>
    </source>
</evidence>
<proteinExistence type="inferred from homology"/>
<accession>Q3ZZ31</accession>
<organism>
    <name type="scientific">Dehalococcoides mccartyi (strain CBDB1)</name>
    <dbReference type="NCBI Taxonomy" id="255470"/>
    <lineage>
        <taxon>Bacteria</taxon>
        <taxon>Bacillati</taxon>
        <taxon>Chloroflexota</taxon>
        <taxon>Dehalococcoidia</taxon>
        <taxon>Dehalococcoidales</taxon>
        <taxon>Dehalococcoidaceae</taxon>
        <taxon>Dehalococcoides</taxon>
    </lineage>
</organism>
<reference key="1">
    <citation type="journal article" date="2005" name="Nat. Biotechnol.">
        <title>Genome sequence of the chlorinated compound-respiring bacterium Dehalococcoides species strain CBDB1.</title>
        <authorList>
            <person name="Kube M."/>
            <person name="Beck A."/>
            <person name="Zinder S.H."/>
            <person name="Kuhl H."/>
            <person name="Reinhardt R."/>
            <person name="Adrian L."/>
        </authorList>
    </citation>
    <scope>NUCLEOTIDE SEQUENCE [LARGE SCALE GENOMIC DNA]</scope>
    <source>
        <strain>CBDB1</strain>
    </source>
</reference>
<comment type="function">
    <text evidence="1">Required for rescue of stalled ribosomes mediated by trans-translation. Binds to transfer-messenger RNA (tmRNA), required for stable association of tmRNA with ribosomes. tmRNA and SmpB together mimic tRNA shape, replacing the anticodon stem-loop with SmpB. tmRNA is encoded by the ssrA gene; the 2 termini fold to resemble tRNA(Ala) and it encodes a 'tag peptide', a short internal open reading frame. During trans-translation Ala-aminoacylated tmRNA acts like a tRNA, entering the A-site of stalled ribosomes, displacing the stalled mRNA. The ribosome then switches to translate the ORF on the tmRNA; the nascent peptide is terminated with the 'tag peptide' encoded by the tmRNA and targeted for degradation. The ribosome is freed to recommence translation, which seems to be the essential function of trans-translation.</text>
</comment>
<comment type="subcellular location">
    <subcellularLocation>
        <location evidence="1">Cytoplasm</location>
    </subcellularLocation>
    <text evidence="1">The tmRNA-SmpB complex associates with stalled 70S ribosomes.</text>
</comment>
<comment type="similarity">
    <text evidence="1">Belongs to the SmpB family.</text>
</comment>
<sequence length="172" mass="20299">MHYARIVSNLRLGYDIIHMAEYVTLTTNRKAFHNYFLEEKYEAGIMLLGTEIKSLRSGRVNMGDAYVKPQRGELWLVNAHISAYECSGHTSHEPMRERKLLMHRKEIALLMSKVKEKGLTLIPVRIYLKNDIAKVELSLGRGKKLYDKRDTVTKRDTERELEREVKYRNFRR</sequence>